<accession>Q7W2N5</accession>
<reference key="1">
    <citation type="journal article" date="2003" name="Nat. Genet.">
        <title>Comparative analysis of the genome sequences of Bordetella pertussis, Bordetella parapertussis and Bordetella bronchiseptica.</title>
        <authorList>
            <person name="Parkhill J."/>
            <person name="Sebaihia M."/>
            <person name="Preston A."/>
            <person name="Murphy L.D."/>
            <person name="Thomson N.R."/>
            <person name="Harris D.E."/>
            <person name="Holden M.T.G."/>
            <person name="Churcher C.M."/>
            <person name="Bentley S.D."/>
            <person name="Mungall K.L."/>
            <person name="Cerdeno-Tarraga A.-M."/>
            <person name="Temple L."/>
            <person name="James K.D."/>
            <person name="Harris B."/>
            <person name="Quail M.A."/>
            <person name="Achtman M."/>
            <person name="Atkin R."/>
            <person name="Baker S."/>
            <person name="Basham D."/>
            <person name="Bason N."/>
            <person name="Cherevach I."/>
            <person name="Chillingworth T."/>
            <person name="Collins M."/>
            <person name="Cronin A."/>
            <person name="Davis P."/>
            <person name="Doggett J."/>
            <person name="Feltwell T."/>
            <person name="Goble A."/>
            <person name="Hamlin N."/>
            <person name="Hauser H."/>
            <person name="Holroyd S."/>
            <person name="Jagels K."/>
            <person name="Leather S."/>
            <person name="Moule S."/>
            <person name="Norberczak H."/>
            <person name="O'Neil S."/>
            <person name="Ormond D."/>
            <person name="Price C."/>
            <person name="Rabbinowitsch E."/>
            <person name="Rutter S."/>
            <person name="Sanders M."/>
            <person name="Saunders D."/>
            <person name="Seeger K."/>
            <person name="Sharp S."/>
            <person name="Simmonds M."/>
            <person name="Skelton J."/>
            <person name="Squares R."/>
            <person name="Squares S."/>
            <person name="Stevens K."/>
            <person name="Unwin L."/>
            <person name="Whitehead S."/>
            <person name="Barrell B.G."/>
            <person name="Maskell D.J."/>
        </authorList>
    </citation>
    <scope>NUCLEOTIDE SEQUENCE [LARGE SCALE GENOMIC DNA]</scope>
    <source>
        <strain>12822 / ATCC BAA-587 / NCTC 13253</strain>
    </source>
</reference>
<feature type="chain" id="PRO_0000209162" description="Protein Smg homolog">
    <location>
        <begin position="1"/>
        <end position="152"/>
    </location>
</feature>
<protein>
    <recommendedName>
        <fullName evidence="1">Protein Smg homolog</fullName>
    </recommendedName>
</protein>
<evidence type="ECO:0000255" key="1">
    <source>
        <dbReference type="HAMAP-Rule" id="MF_00598"/>
    </source>
</evidence>
<comment type="similarity">
    <text evidence="1">Belongs to the Smg family.</text>
</comment>
<proteinExistence type="inferred from homology"/>
<dbReference type="EMBL" id="BX640436">
    <property type="protein sequence ID" value="CAE39650.1"/>
    <property type="molecule type" value="Genomic_DNA"/>
</dbReference>
<dbReference type="RefSeq" id="WP_003815964.1">
    <property type="nucleotide sequence ID" value="NC_002928.3"/>
</dbReference>
<dbReference type="SMR" id="Q7W2N5"/>
<dbReference type="KEGG" id="bpa:BPP4371"/>
<dbReference type="HOGENOM" id="CLU_133242_0_0_4"/>
<dbReference type="Proteomes" id="UP000001421">
    <property type="component" value="Chromosome"/>
</dbReference>
<dbReference type="HAMAP" id="MF_00598">
    <property type="entry name" value="Smg"/>
    <property type="match status" value="1"/>
</dbReference>
<dbReference type="InterPro" id="IPR007456">
    <property type="entry name" value="Smg"/>
</dbReference>
<dbReference type="PANTHER" id="PTHR38692">
    <property type="entry name" value="PROTEIN SMG"/>
    <property type="match status" value="1"/>
</dbReference>
<dbReference type="PANTHER" id="PTHR38692:SF1">
    <property type="entry name" value="PROTEIN SMG"/>
    <property type="match status" value="1"/>
</dbReference>
<dbReference type="Pfam" id="PF04361">
    <property type="entry name" value="DUF494"/>
    <property type="match status" value="1"/>
</dbReference>
<gene>
    <name evidence="1" type="primary">smg</name>
    <name type="ordered locus">BPP4371</name>
</gene>
<name>SMG_BORPA</name>
<organism>
    <name type="scientific">Bordetella parapertussis (strain 12822 / ATCC BAA-587 / NCTC 13253)</name>
    <dbReference type="NCBI Taxonomy" id="257311"/>
    <lineage>
        <taxon>Bacteria</taxon>
        <taxon>Pseudomonadati</taxon>
        <taxon>Pseudomonadota</taxon>
        <taxon>Betaproteobacteria</taxon>
        <taxon>Burkholderiales</taxon>
        <taxon>Alcaligenaceae</taxon>
        <taxon>Bordetella</taxon>
    </lineage>
</organism>
<sequence length="152" mass="16867">MFDILVYLFENYYTPQACPAADVLAKRLAAAGFEHEDIDDALGWLYGLAETTERCVELAHAPATGIRIYTDAEYQQLGTESIGFITFLESAGVLPAPLREIVIDRALASPETPISLSKIKIIALMVLWSQEAEIDNLVLEELLDDEGSRRLH</sequence>